<proteinExistence type="evidence at transcript level"/>
<dbReference type="EMBL" id="AC002333">
    <property type="status" value="NOT_ANNOTATED_CDS"/>
    <property type="molecule type" value="Genomic_DNA"/>
</dbReference>
<dbReference type="EMBL" id="CP002685">
    <property type="protein sequence ID" value="AEC10316.2"/>
    <property type="molecule type" value="Genomic_DNA"/>
</dbReference>
<dbReference type="EMBL" id="AY219095">
    <property type="protein sequence ID" value="AAO37182.1"/>
    <property type="molecule type" value="mRNA"/>
</dbReference>
<dbReference type="EMBL" id="AY219096">
    <property type="protein sequence ID" value="AAO37183.1"/>
    <property type="molecule type" value="mRNA"/>
</dbReference>
<dbReference type="EMBL" id="AY954836">
    <property type="protein sequence ID" value="AAX55162.1"/>
    <property type="molecule type" value="Genomic_DNA"/>
</dbReference>
<dbReference type="RefSeq" id="NP_850401.5">
    <molecule id="Q84X12-2"/>
    <property type="nucleotide sequence ID" value="NM_180070.4"/>
</dbReference>
<dbReference type="PaxDb" id="3702-AT2G43745.1"/>
<dbReference type="EnsemblPlants" id="AT2G43745.1">
    <molecule id="Q84X12-2"/>
    <property type="protein sequence ID" value="AT2G43745.1"/>
    <property type="gene ID" value="AT2G43745"/>
</dbReference>
<dbReference type="GeneID" id="818977"/>
<dbReference type="Gramene" id="AT2G43745.1">
    <molecule id="Q84X12-2"/>
    <property type="protein sequence ID" value="AT2G43745.1"/>
    <property type="gene ID" value="AT2G43745"/>
</dbReference>
<dbReference type="KEGG" id="ath:AT2G43745"/>
<dbReference type="Araport" id="AT2G43745"/>
<dbReference type="TAIR" id="AT2G43745"/>
<dbReference type="InParanoid" id="Q84X12"/>
<dbReference type="PRO" id="PR:Q84X12"/>
<dbReference type="Proteomes" id="UP000006548">
    <property type="component" value="Chromosome 2"/>
</dbReference>
<dbReference type="ExpressionAtlas" id="Q84X12">
    <property type="expression patterns" value="baseline and differential"/>
</dbReference>
<dbReference type="GO" id="GO:0016020">
    <property type="term" value="C:membrane"/>
    <property type="evidence" value="ECO:0007669"/>
    <property type="project" value="UniProtKB-SubCell"/>
</dbReference>
<dbReference type="GO" id="GO:0030246">
    <property type="term" value="F:carbohydrate binding"/>
    <property type="evidence" value="ECO:0007669"/>
    <property type="project" value="UniProtKB-KW"/>
</dbReference>
<dbReference type="Gene3D" id="2.100.10.30">
    <property type="entry name" value="Jacalin-like lectin domain"/>
    <property type="match status" value="1"/>
</dbReference>
<dbReference type="InterPro" id="IPR001229">
    <property type="entry name" value="Jacalin-like_lectin_dom"/>
</dbReference>
<dbReference type="InterPro" id="IPR036404">
    <property type="entry name" value="Jacalin-like_lectin_dom_sf"/>
</dbReference>
<dbReference type="PROSITE" id="PS51752">
    <property type="entry name" value="JACALIN_LECTIN"/>
    <property type="match status" value="1"/>
</dbReference>
<feature type="chain" id="PRO_0000430390" description="Probable jacalin-related lectin 26">
    <location>
        <begin position="1"/>
        <end position="155"/>
    </location>
</feature>
<feature type="transmembrane region" description="Helical; Name=1" evidence="1">
    <location>
        <begin position="26"/>
        <end position="48"/>
    </location>
</feature>
<feature type="transmembrane region" description="Helical; Name=2" evidence="1">
    <location>
        <begin position="127"/>
        <end position="149"/>
    </location>
</feature>
<feature type="domain" description="Jacalin-type lectin" evidence="2">
    <location>
        <begin position="47"/>
        <end position="155"/>
    </location>
</feature>
<feature type="splice variant" id="VSP_056718" description="In isoform 2." evidence="3">
    <original>VSFVSITIIYFCVCVRSGQVLFLMKFKRS</original>
    <variation>LRLNQDEYVT</variation>
    <location>
        <begin position="127"/>
        <end position="155"/>
    </location>
</feature>
<organism>
    <name type="scientific">Arabidopsis thaliana</name>
    <name type="common">Mouse-ear cress</name>
    <dbReference type="NCBI Taxonomy" id="3702"/>
    <lineage>
        <taxon>Eukaryota</taxon>
        <taxon>Viridiplantae</taxon>
        <taxon>Streptophyta</taxon>
        <taxon>Embryophyta</taxon>
        <taxon>Tracheophyta</taxon>
        <taxon>Spermatophyta</taxon>
        <taxon>Magnoliopsida</taxon>
        <taxon>eudicotyledons</taxon>
        <taxon>Gunneridae</taxon>
        <taxon>Pentapetalae</taxon>
        <taxon>rosids</taxon>
        <taxon>malvids</taxon>
        <taxon>Brassicales</taxon>
        <taxon>Brassicaceae</taxon>
        <taxon>Camelineae</taxon>
        <taxon>Arabidopsis</taxon>
    </lineage>
</organism>
<gene>
    <name type="primary">JAL26</name>
    <name type="ordered locus">At2g43745</name>
    <name type="ORF">F18O19.33</name>
</gene>
<comment type="subcellular location">
    <subcellularLocation>
        <location evidence="4">Membrane</location>
        <topology evidence="4">Multi-pass membrane protein</topology>
    </subcellularLocation>
</comment>
<comment type="alternative products">
    <event type="alternative splicing"/>
    <isoform>
        <id>Q84X12-1</id>
        <name>1</name>
        <sequence type="displayed"/>
    </isoform>
    <isoform>
        <id>Q84X12-2</id>
        <name>2</name>
        <sequence type="described" ref="VSP_056718"/>
    </isoform>
</comment>
<comment type="similarity">
    <text evidence="2 4">Belongs to the jacalin lectin family.</text>
</comment>
<reference key="1">
    <citation type="journal article" date="1999" name="Nature">
        <title>Sequence and analysis of chromosome 2 of the plant Arabidopsis thaliana.</title>
        <authorList>
            <person name="Lin X."/>
            <person name="Kaul S."/>
            <person name="Rounsley S.D."/>
            <person name="Shea T.P."/>
            <person name="Benito M.-I."/>
            <person name="Town C.D."/>
            <person name="Fujii C.Y."/>
            <person name="Mason T.M."/>
            <person name="Bowman C.L."/>
            <person name="Barnstead M.E."/>
            <person name="Feldblyum T.V."/>
            <person name="Buell C.R."/>
            <person name="Ketchum K.A."/>
            <person name="Lee J.J."/>
            <person name="Ronning C.M."/>
            <person name="Koo H.L."/>
            <person name="Moffat K.S."/>
            <person name="Cronin L.A."/>
            <person name="Shen M."/>
            <person name="Pai G."/>
            <person name="Van Aken S."/>
            <person name="Umayam L."/>
            <person name="Tallon L.J."/>
            <person name="Gill J.E."/>
            <person name="Adams M.D."/>
            <person name="Carrera A.J."/>
            <person name="Creasy T.H."/>
            <person name="Goodman H.M."/>
            <person name="Somerville C.R."/>
            <person name="Copenhaver G.P."/>
            <person name="Preuss D."/>
            <person name="Nierman W.C."/>
            <person name="White O."/>
            <person name="Eisen J.A."/>
            <person name="Salzberg S.L."/>
            <person name="Fraser C.M."/>
            <person name="Venter J.C."/>
        </authorList>
    </citation>
    <scope>NUCLEOTIDE SEQUENCE [LARGE SCALE GENOMIC DNA]</scope>
    <source>
        <strain>cv. Columbia</strain>
    </source>
</reference>
<reference key="2">
    <citation type="journal article" date="2017" name="Plant J.">
        <title>Araport11: a complete reannotation of the Arabidopsis thaliana reference genome.</title>
        <authorList>
            <person name="Cheng C.Y."/>
            <person name="Krishnakumar V."/>
            <person name="Chan A.P."/>
            <person name="Thibaud-Nissen F."/>
            <person name="Schobel S."/>
            <person name="Town C.D."/>
        </authorList>
    </citation>
    <scope>GENOME REANNOTATION</scope>
    <source>
        <strain>cv. Columbia</strain>
    </source>
</reference>
<reference key="3">
    <citation type="journal article" date="2002" name="Plant Physiol.">
        <title>Cloning and sequencing of cDNAs for hypothetical genes from chromosome 2 of Arabidopsis.</title>
        <authorList>
            <person name="Xiao Y.-L."/>
            <person name="Malik M."/>
            <person name="Whitelaw C.A."/>
            <person name="Town C.D."/>
        </authorList>
    </citation>
    <scope>NUCLEOTIDE SEQUENCE [LARGE SCALE MRNA] (ISOFORMS 1 AND 2)</scope>
    <source>
        <strain>cv. Columbia</strain>
    </source>
</reference>
<reference key="4">
    <citation type="submission" date="2005-03" db="EMBL/GenBank/DDBJ databases">
        <authorList>
            <person name="Underwood B.A."/>
            <person name="Xiao Y.-L."/>
            <person name="Moskal W.A. Jr."/>
            <person name="Monaghan E.L."/>
            <person name="Wang W."/>
            <person name="Redman J.C."/>
            <person name="Wu H.C."/>
            <person name="Utterback T."/>
            <person name="Town C.D."/>
        </authorList>
    </citation>
    <scope>NUCLEOTIDE SEQUENCE [LARGE SCALE GENOMIC DNA]</scope>
    <source>
        <strain>cv. Columbia</strain>
    </source>
</reference>
<reference key="5">
    <citation type="journal article" date="2008" name="Plant Cell Physiol.">
        <title>Antagonistic jacalin-related lectins regulate the size of ER body-type beta-glucosidase complexes in Arabidopsis thaliana.</title>
        <authorList>
            <person name="Nagano A.J."/>
            <person name="Fukao Y."/>
            <person name="Fujiwara M."/>
            <person name="Nishimura M."/>
            <person name="Hara-Nishimura I."/>
        </authorList>
    </citation>
    <scope>GENE FAMILY</scope>
    <scope>NOMENCLATURE</scope>
</reference>
<evidence type="ECO:0000255" key="1"/>
<evidence type="ECO:0000255" key="2">
    <source>
        <dbReference type="PROSITE-ProRule" id="PRU01088"/>
    </source>
</evidence>
<evidence type="ECO:0000303" key="3">
    <source>
    </source>
</evidence>
<evidence type="ECO:0000305" key="4"/>
<accession>Q84X12</accession>
<accession>F4IS38</accession>
<accession>Q84X13</accession>
<name>JAL26_ARATH</name>
<sequence>MESINESYDDSSSFGQDSLLYNRPFAYLYLSFHLKLLYSVPASYIAMIRAGSVGKKSTCEYTYWDDGVGEEVMGDDSWDYEGRKISHIYVAFDEVIMSIQFGFLENGALVLSKQHGGIEEGSNFRVVSFVSITIIYFCVCVRSGQVLFLMKFKRS</sequence>
<keyword id="KW-0025">Alternative splicing</keyword>
<keyword id="KW-0430">Lectin</keyword>
<keyword id="KW-0472">Membrane</keyword>
<keyword id="KW-1185">Reference proteome</keyword>
<keyword id="KW-0812">Transmembrane</keyword>
<keyword id="KW-1133">Transmembrane helix</keyword>
<protein>
    <recommendedName>
        <fullName>Probable jacalin-related lectin 26</fullName>
    </recommendedName>
</protein>